<organism>
    <name type="scientific">Mesomycoplasma hyopneumoniae (strain 7448)</name>
    <name type="common">Mycoplasma hyopneumoniae</name>
    <dbReference type="NCBI Taxonomy" id="262722"/>
    <lineage>
        <taxon>Bacteria</taxon>
        <taxon>Bacillati</taxon>
        <taxon>Mycoplasmatota</taxon>
        <taxon>Mycoplasmoidales</taxon>
        <taxon>Metamycoplasmataceae</taxon>
        <taxon>Mesomycoplasma</taxon>
    </lineage>
</organism>
<dbReference type="EC" id="6.1.1.17" evidence="1"/>
<dbReference type="EMBL" id="AE017244">
    <property type="protein sequence ID" value="AAZ53515.2"/>
    <property type="molecule type" value="Genomic_DNA"/>
</dbReference>
<dbReference type="RefSeq" id="WP_020835580.1">
    <property type="nucleotide sequence ID" value="NC_007332.1"/>
</dbReference>
<dbReference type="SMR" id="Q4A8M4"/>
<dbReference type="KEGG" id="mhp:MHP7448_0141"/>
<dbReference type="HOGENOM" id="CLU_015768_6_1_14"/>
<dbReference type="Proteomes" id="UP000000553">
    <property type="component" value="Chromosome"/>
</dbReference>
<dbReference type="GO" id="GO:0005829">
    <property type="term" value="C:cytosol"/>
    <property type="evidence" value="ECO:0007669"/>
    <property type="project" value="TreeGrafter"/>
</dbReference>
<dbReference type="GO" id="GO:0005524">
    <property type="term" value="F:ATP binding"/>
    <property type="evidence" value="ECO:0007669"/>
    <property type="project" value="UniProtKB-UniRule"/>
</dbReference>
<dbReference type="GO" id="GO:0004818">
    <property type="term" value="F:glutamate-tRNA ligase activity"/>
    <property type="evidence" value="ECO:0007669"/>
    <property type="project" value="UniProtKB-UniRule"/>
</dbReference>
<dbReference type="GO" id="GO:0000049">
    <property type="term" value="F:tRNA binding"/>
    <property type="evidence" value="ECO:0007669"/>
    <property type="project" value="InterPro"/>
</dbReference>
<dbReference type="GO" id="GO:0008270">
    <property type="term" value="F:zinc ion binding"/>
    <property type="evidence" value="ECO:0007669"/>
    <property type="project" value="InterPro"/>
</dbReference>
<dbReference type="GO" id="GO:0006424">
    <property type="term" value="P:glutamyl-tRNA aminoacylation"/>
    <property type="evidence" value="ECO:0007669"/>
    <property type="project" value="UniProtKB-UniRule"/>
</dbReference>
<dbReference type="CDD" id="cd00808">
    <property type="entry name" value="GluRS_core"/>
    <property type="match status" value="1"/>
</dbReference>
<dbReference type="FunFam" id="3.40.50.620:FF:000007">
    <property type="entry name" value="Glutamate--tRNA ligase"/>
    <property type="match status" value="1"/>
</dbReference>
<dbReference type="Gene3D" id="1.10.10.350">
    <property type="match status" value="1"/>
</dbReference>
<dbReference type="Gene3D" id="3.40.50.620">
    <property type="entry name" value="HUPs"/>
    <property type="match status" value="1"/>
</dbReference>
<dbReference type="HAMAP" id="MF_00022">
    <property type="entry name" value="Glu_tRNA_synth_type1"/>
    <property type="match status" value="1"/>
</dbReference>
<dbReference type="InterPro" id="IPR045462">
    <property type="entry name" value="aa-tRNA-synth_I_cd-bd"/>
</dbReference>
<dbReference type="InterPro" id="IPR020751">
    <property type="entry name" value="aa-tRNA-synth_I_codon-bd_sub2"/>
</dbReference>
<dbReference type="InterPro" id="IPR001412">
    <property type="entry name" value="aa-tRNA-synth_I_CS"/>
</dbReference>
<dbReference type="InterPro" id="IPR008925">
    <property type="entry name" value="aa_tRNA-synth_I_cd-bd_sf"/>
</dbReference>
<dbReference type="InterPro" id="IPR004527">
    <property type="entry name" value="Glu-tRNA-ligase_bac/mito"/>
</dbReference>
<dbReference type="InterPro" id="IPR000924">
    <property type="entry name" value="Glu/Gln-tRNA-synth"/>
</dbReference>
<dbReference type="InterPro" id="IPR020058">
    <property type="entry name" value="Glu/Gln-tRNA-synth_Ib_cat-dom"/>
</dbReference>
<dbReference type="InterPro" id="IPR049940">
    <property type="entry name" value="GluQ/Sye"/>
</dbReference>
<dbReference type="InterPro" id="IPR033910">
    <property type="entry name" value="GluRS_core"/>
</dbReference>
<dbReference type="InterPro" id="IPR014729">
    <property type="entry name" value="Rossmann-like_a/b/a_fold"/>
</dbReference>
<dbReference type="NCBIfam" id="TIGR00464">
    <property type="entry name" value="gltX_bact"/>
    <property type="match status" value="1"/>
</dbReference>
<dbReference type="PANTHER" id="PTHR43311">
    <property type="entry name" value="GLUTAMATE--TRNA LIGASE"/>
    <property type="match status" value="1"/>
</dbReference>
<dbReference type="PANTHER" id="PTHR43311:SF2">
    <property type="entry name" value="GLUTAMATE--TRNA LIGASE, MITOCHONDRIAL-RELATED"/>
    <property type="match status" value="1"/>
</dbReference>
<dbReference type="Pfam" id="PF19269">
    <property type="entry name" value="Anticodon_2"/>
    <property type="match status" value="1"/>
</dbReference>
<dbReference type="Pfam" id="PF00749">
    <property type="entry name" value="tRNA-synt_1c"/>
    <property type="match status" value="1"/>
</dbReference>
<dbReference type="PRINTS" id="PR00987">
    <property type="entry name" value="TRNASYNTHGLU"/>
</dbReference>
<dbReference type="SUPFAM" id="SSF48163">
    <property type="entry name" value="An anticodon-binding domain of class I aminoacyl-tRNA synthetases"/>
    <property type="match status" value="1"/>
</dbReference>
<dbReference type="SUPFAM" id="SSF52374">
    <property type="entry name" value="Nucleotidylyl transferase"/>
    <property type="match status" value="1"/>
</dbReference>
<dbReference type="PROSITE" id="PS00178">
    <property type="entry name" value="AA_TRNA_LIGASE_I"/>
    <property type="match status" value="1"/>
</dbReference>
<comment type="function">
    <text evidence="1">Catalyzes the attachment of glutamate to tRNA(Glu) in a two-step reaction: glutamate is first activated by ATP to form Glu-AMP and then transferred to the acceptor end of tRNA(Glu).</text>
</comment>
<comment type="catalytic activity">
    <reaction evidence="1">
        <text>tRNA(Glu) + L-glutamate + ATP = L-glutamyl-tRNA(Glu) + AMP + diphosphate</text>
        <dbReference type="Rhea" id="RHEA:23540"/>
        <dbReference type="Rhea" id="RHEA-COMP:9663"/>
        <dbReference type="Rhea" id="RHEA-COMP:9680"/>
        <dbReference type="ChEBI" id="CHEBI:29985"/>
        <dbReference type="ChEBI" id="CHEBI:30616"/>
        <dbReference type="ChEBI" id="CHEBI:33019"/>
        <dbReference type="ChEBI" id="CHEBI:78442"/>
        <dbReference type="ChEBI" id="CHEBI:78520"/>
        <dbReference type="ChEBI" id="CHEBI:456215"/>
        <dbReference type="EC" id="6.1.1.17"/>
    </reaction>
</comment>
<comment type="subunit">
    <text evidence="1">Monomer.</text>
</comment>
<comment type="subcellular location">
    <subcellularLocation>
        <location evidence="1">Cytoplasm</location>
    </subcellularLocation>
</comment>
<comment type="similarity">
    <text evidence="1">Belongs to the class-I aminoacyl-tRNA synthetase family. Glutamate--tRNA ligase type 1 subfamily.</text>
</comment>
<proteinExistence type="inferred from homology"/>
<name>SYE_MESH7</name>
<protein>
    <recommendedName>
        <fullName evidence="1">Glutamate--tRNA ligase</fullName>
        <ecNumber evidence="1">6.1.1.17</ecNumber>
    </recommendedName>
    <alternativeName>
        <fullName evidence="1">Glutamyl-tRNA synthetase</fullName>
        <shortName evidence="1">GluRS</shortName>
    </alternativeName>
</protein>
<evidence type="ECO:0000255" key="1">
    <source>
        <dbReference type="HAMAP-Rule" id="MF_00022"/>
    </source>
</evidence>
<gene>
    <name evidence="1" type="primary">gltX</name>
    <name type="ordered locus">MHP7448_0141</name>
</gene>
<reference key="1">
    <citation type="journal article" date="2005" name="J. Bacteriol.">
        <title>Swine and poultry pathogens: the complete genome sequences of two strains of Mycoplasma hyopneumoniae and a strain of Mycoplasma synoviae.</title>
        <authorList>
            <person name="Vasconcelos A.T.R."/>
            <person name="Ferreira H.B."/>
            <person name="Bizarro C.V."/>
            <person name="Bonatto S.L."/>
            <person name="Carvalho M.O."/>
            <person name="Pinto P.M."/>
            <person name="Almeida D.F."/>
            <person name="Almeida L.G.P."/>
            <person name="Almeida R."/>
            <person name="Alves-Junior L."/>
            <person name="Assuncao E.N."/>
            <person name="Azevedo V.A.C."/>
            <person name="Bogo M.R."/>
            <person name="Brigido M.M."/>
            <person name="Brocchi M."/>
            <person name="Burity H.A."/>
            <person name="Camargo A.A."/>
            <person name="Camargo S.S."/>
            <person name="Carepo M.S."/>
            <person name="Carraro D.M."/>
            <person name="de Mattos Cascardo J.C."/>
            <person name="Castro L.A."/>
            <person name="Cavalcanti G."/>
            <person name="Chemale G."/>
            <person name="Collevatti R.G."/>
            <person name="Cunha C.W."/>
            <person name="Dallagiovanna B."/>
            <person name="Dambros B.P."/>
            <person name="Dellagostin O.A."/>
            <person name="Falcao C."/>
            <person name="Fantinatti-Garboggini F."/>
            <person name="Felipe M.S.S."/>
            <person name="Fiorentin L."/>
            <person name="Franco G.R."/>
            <person name="Freitas N.S.A."/>
            <person name="Frias D."/>
            <person name="Grangeiro T.B."/>
            <person name="Grisard E.C."/>
            <person name="Guimaraes C.T."/>
            <person name="Hungria M."/>
            <person name="Jardim S.N."/>
            <person name="Krieger M.A."/>
            <person name="Laurino J.P."/>
            <person name="Lima L.F.A."/>
            <person name="Lopes M.I."/>
            <person name="Loreto E.L.S."/>
            <person name="Madeira H.M.F."/>
            <person name="Manfio G.P."/>
            <person name="Maranhao A.Q."/>
            <person name="Martinkovics C.T."/>
            <person name="Medeiros S.R.B."/>
            <person name="Moreira M.A.M."/>
            <person name="Neiva M."/>
            <person name="Ramalho-Neto C.E."/>
            <person name="Nicolas M.F."/>
            <person name="Oliveira S.C."/>
            <person name="Paixao R.F.C."/>
            <person name="Pedrosa F.O."/>
            <person name="Pena S.D.J."/>
            <person name="Pereira M."/>
            <person name="Pereira-Ferrari L."/>
            <person name="Piffer I."/>
            <person name="Pinto L.S."/>
            <person name="Potrich D.P."/>
            <person name="Salim A.C.M."/>
            <person name="Santos F.R."/>
            <person name="Schmitt R."/>
            <person name="Schneider M.P.C."/>
            <person name="Schrank A."/>
            <person name="Schrank I.S."/>
            <person name="Schuck A.F."/>
            <person name="Seuanez H.N."/>
            <person name="Silva D.W."/>
            <person name="Silva R."/>
            <person name="Silva S.C."/>
            <person name="Soares C.M.A."/>
            <person name="Souza K.R.L."/>
            <person name="Souza R.C."/>
            <person name="Staats C.C."/>
            <person name="Steffens M.B.R."/>
            <person name="Teixeira S.M.R."/>
            <person name="Urmenyi T.P."/>
            <person name="Vainstein M.H."/>
            <person name="Zuccherato L.W."/>
            <person name="Simpson A.J.G."/>
            <person name="Zaha A."/>
        </authorList>
    </citation>
    <scope>NUCLEOTIDE SEQUENCE [LARGE SCALE GENOMIC DNA]</scope>
    <source>
        <strain>7448</strain>
    </source>
</reference>
<accession>Q4A8M4</accession>
<sequence length="467" mass="55370">MKIRTRYAPSPTGFLHIGGARTALFNYLFAKHHNGDFILRIEDSDNSRNIKDGEKSQIENLLWLGIIPDEKPGSETKFGPYRQSEKLERYQKLAQELIKKGFAYYAFDNQEELELQKKEQIAKGIFSFRYDQNWLKISDQEKQKRLKNKHFVIRFKVDKAKNFCWNDLVRGQICFEGSAISDWVIIKSDGFPTYNFAVVVDDFDMEISHIFRGEEHISNTPKQIGIYQAFNWKTPKFGHLTIITDKNGKKLSKRDKNLFQFIEDYKNQGYHSEAFFNFLALLGWTSPDSQEFFDHKSLIKAFDYKRLSKAPSYFDIEKLNWFSKSYISKMTVDKILENLELSDNQIWNRFFVETFQKSSIKYADFYKNFEFFHRPKQEMDEKMLEIFEKLDKKPVKIFASRIDYQNWDYTKINDLIKEIGQKLEITGKNLLLPIRLATTFTNSGPELARAIWLLGKKIIEKRLLKWK</sequence>
<feature type="chain" id="PRO_0000237372" description="Glutamate--tRNA ligase">
    <location>
        <begin position="1"/>
        <end position="467"/>
    </location>
</feature>
<feature type="short sequence motif" description="'HIGH' region" evidence="1">
    <location>
        <begin position="9"/>
        <end position="19"/>
    </location>
</feature>
<feature type="short sequence motif" description="'KMSKS' region" evidence="1">
    <location>
        <begin position="250"/>
        <end position="254"/>
    </location>
</feature>
<feature type="binding site" evidence="1">
    <location>
        <position position="253"/>
    </location>
    <ligand>
        <name>ATP</name>
        <dbReference type="ChEBI" id="CHEBI:30616"/>
    </ligand>
</feature>
<keyword id="KW-0030">Aminoacyl-tRNA synthetase</keyword>
<keyword id="KW-0067">ATP-binding</keyword>
<keyword id="KW-0963">Cytoplasm</keyword>
<keyword id="KW-0436">Ligase</keyword>
<keyword id="KW-0547">Nucleotide-binding</keyword>
<keyword id="KW-0648">Protein biosynthesis</keyword>